<feature type="chain" id="PRO_1000147577" description="PqqA peptide cyclase">
    <location>
        <begin position="1"/>
        <end position="384"/>
    </location>
</feature>
<feature type="domain" description="Radical SAM core" evidence="2">
    <location>
        <begin position="14"/>
        <end position="230"/>
    </location>
</feature>
<feature type="binding site" evidence="1">
    <location>
        <position position="28"/>
    </location>
    <ligand>
        <name>[4Fe-4S] cluster</name>
        <dbReference type="ChEBI" id="CHEBI:49883"/>
        <note>4Fe-4S-S-AdoMet</note>
    </ligand>
</feature>
<feature type="binding site" evidence="1">
    <location>
        <position position="32"/>
    </location>
    <ligand>
        <name>[4Fe-4S] cluster</name>
        <dbReference type="ChEBI" id="CHEBI:49883"/>
        <note>4Fe-4S-S-AdoMet</note>
    </ligand>
</feature>
<feature type="binding site" evidence="1">
    <location>
        <position position="35"/>
    </location>
    <ligand>
        <name>[4Fe-4S] cluster</name>
        <dbReference type="ChEBI" id="CHEBI:49883"/>
        <note>4Fe-4S-S-AdoMet</note>
    </ligand>
</feature>
<protein>
    <recommendedName>
        <fullName evidence="1">PqqA peptide cyclase</fullName>
        <ecNumber evidence="1">1.21.98.4</ecNumber>
    </recommendedName>
    <alternativeName>
        <fullName evidence="1">Coenzyme PQQ synthesis protein E</fullName>
    </alternativeName>
    <alternativeName>
        <fullName evidence="1">Pyrroloquinoline quinone biosynthesis protein E</fullName>
    </alternativeName>
</protein>
<sequence length="384" mass="41677">MNAPTPAPSPVDVIPAPVGLLAELTHRCPLRCPYCSNPLELDRRSAELDTQTWLRVLTEAAGLGVLHVHLSGGEPTARPDIVEITAKCAELGLYSNLITSGVGGALAKLDALYDVGLDHVQLSVQGVDAANAEKIGGLKNAQPQKMQFAARVTELGLPLTLNSVIHRGNIHEVPGFIDLAVKLGAKRLEVAHTQYYGWAYVNRAALMPDKSQVDESIRIVEAARERLKGQLVIDLVVPDYYAKYPKACAGGWGRKLMNVTPQGKVLPCHAAETIPGLEFWYVTDHSLGEIWTQSPAFAAYRGTSWMKEPCRSCDRREKDWGGCRCQALALTGDAANTDPACSLSPLHAKMRDLAKEEAAETPPDYIYRSIGTNVQNPLSEKAPL</sequence>
<dbReference type="EC" id="1.21.98.4" evidence="1"/>
<dbReference type="EMBL" id="CP001298">
    <property type="protein sequence ID" value="ACK83000.1"/>
    <property type="molecule type" value="Genomic_DNA"/>
</dbReference>
<dbReference type="RefSeq" id="WP_012253377.1">
    <property type="nucleotide sequence ID" value="NC_011757.1"/>
</dbReference>
<dbReference type="SMR" id="B7KXC6"/>
<dbReference type="GeneID" id="72989474"/>
<dbReference type="KEGG" id="mch:Mchl_2153"/>
<dbReference type="HOGENOM" id="CLU_009273_4_7_5"/>
<dbReference type="UniPathway" id="UPA00539"/>
<dbReference type="Proteomes" id="UP000002385">
    <property type="component" value="Chromosome"/>
</dbReference>
<dbReference type="GO" id="GO:0051539">
    <property type="term" value="F:4 iron, 4 sulfur cluster binding"/>
    <property type="evidence" value="ECO:0007669"/>
    <property type="project" value="UniProtKB-KW"/>
</dbReference>
<dbReference type="GO" id="GO:0009975">
    <property type="term" value="F:cyclase activity"/>
    <property type="evidence" value="ECO:0007669"/>
    <property type="project" value="UniProtKB-UniRule"/>
</dbReference>
<dbReference type="GO" id="GO:0005506">
    <property type="term" value="F:iron ion binding"/>
    <property type="evidence" value="ECO:0007669"/>
    <property type="project" value="UniProtKB-UniRule"/>
</dbReference>
<dbReference type="GO" id="GO:0016491">
    <property type="term" value="F:oxidoreductase activity"/>
    <property type="evidence" value="ECO:0007669"/>
    <property type="project" value="UniProtKB-KW"/>
</dbReference>
<dbReference type="GO" id="GO:1904047">
    <property type="term" value="F:S-adenosyl-L-methionine binding"/>
    <property type="evidence" value="ECO:0007669"/>
    <property type="project" value="UniProtKB-UniRule"/>
</dbReference>
<dbReference type="GO" id="GO:0018189">
    <property type="term" value="P:pyrroloquinoline quinone biosynthetic process"/>
    <property type="evidence" value="ECO:0007669"/>
    <property type="project" value="UniProtKB-UniRule"/>
</dbReference>
<dbReference type="CDD" id="cd01335">
    <property type="entry name" value="Radical_SAM"/>
    <property type="match status" value="1"/>
</dbReference>
<dbReference type="CDD" id="cd21119">
    <property type="entry name" value="SPASM_PqqE"/>
    <property type="match status" value="1"/>
</dbReference>
<dbReference type="Gene3D" id="3.20.20.70">
    <property type="entry name" value="Aldolase class I"/>
    <property type="match status" value="1"/>
</dbReference>
<dbReference type="HAMAP" id="MF_00660">
    <property type="entry name" value="PqqE"/>
    <property type="match status" value="1"/>
</dbReference>
<dbReference type="InterPro" id="IPR023885">
    <property type="entry name" value="4Fe4S-binding_SPASM_dom"/>
</dbReference>
<dbReference type="InterPro" id="IPR013785">
    <property type="entry name" value="Aldolase_TIM"/>
</dbReference>
<dbReference type="InterPro" id="IPR000385">
    <property type="entry name" value="MoaA_NifB_PqqE_Fe-S-bd_CS"/>
</dbReference>
<dbReference type="InterPro" id="IPR011843">
    <property type="entry name" value="PQQ_synth_PqqE_bac"/>
</dbReference>
<dbReference type="InterPro" id="IPR017200">
    <property type="entry name" value="PqqE-like"/>
</dbReference>
<dbReference type="InterPro" id="IPR050377">
    <property type="entry name" value="Radical_SAM_PqqE_MftC-like"/>
</dbReference>
<dbReference type="InterPro" id="IPR007197">
    <property type="entry name" value="rSAM"/>
</dbReference>
<dbReference type="NCBIfam" id="TIGR02109">
    <property type="entry name" value="PQQ_syn_pqqE"/>
    <property type="match status" value="1"/>
</dbReference>
<dbReference type="NCBIfam" id="TIGR04085">
    <property type="entry name" value="rSAM_more_4Fe4S"/>
    <property type="match status" value="1"/>
</dbReference>
<dbReference type="PANTHER" id="PTHR11228:SF7">
    <property type="entry name" value="PQQA PEPTIDE CYCLASE"/>
    <property type="match status" value="1"/>
</dbReference>
<dbReference type="PANTHER" id="PTHR11228">
    <property type="entry name" value="RADICAL SAM DOMAIN PROTEIN"/>
    <property type="match status" value="1"/>
</dbReference>
<dbReference type="Pfam" id="PF04055">
    <property type="entry name" value="Radical_SAM"/>
    <property type="match status" value="1"/>
</dbReference>
<dbReference type="Pfam" id="PF13186">
    <property type="entry name" value="SPASM"/>
    <property type="match status" value="1"/>
</dbReference>
<dbReference type="PIRSF" id="PIRSF037420">
    <property type="entry name" value="PQQ_syn_pqqE"/>
    <property type="match status" value="1"/>
</dbReference>
<dbReference type="SFLD" id="SFLDF00280">
    <property type="entry name" value="coenzyme_PQQ_synthesis_protein"/>
    <property type="match status" value="1"/>
</dbReference>
<dbReference type="SFLD" id="SFLDG01067">
    <property type="entry name" value="SPASM/twitch_domain_containing"/>
    <property type="match status" value="1"/>
</dbReference>
<dbReference type="SUPFAM" id="SSF102114">
    <property type="entry name" value="Radical SAM enzymes"/>
    <property type="match status" value="1"/>
</dbReference>
<dbReference type="PROSITE" id="PS01305">
    <property type="entry name" value="MOAA_NIFB_PQQE"/>
    <property type="match status" value="1"/>
</dbReference>
<dbReference type="PROSITE" id="PS51918">
    <property type="entry name" value="RADICAL_SAM"/>
    <property type="match status" value="1"/>
</dbReference>
<organism>
    <name type="scientific">Methylorubrum extorquens (strain CM4 / NCIMB 13688)</name>
    <name type="common">Methylobacterium extorquens</name>
    <dbReference type="NCBI Taxonomy" id="440085"/>
    <lineage>
        <taxon>Bacteria</taxon>
        <taxon>Pseudomonadati</taxon>
        <taxon>Pseudomonadota</taxon>
        <taxon>Alphaproteobacteria</taxon>
        <taxon>Hyphomicrobiales</taxon>
        <taxon>Methylobacteriaceae</taxon>
        <taxon>Methylorubrum</taxon>
    </lineage>
</organism>
<keyword id="KW-0004">4Fe-4S</keyword>
<keyword id="KW-0408">Iron</keyword>
<keyword id="KW-0411">Iron-sulfur</keyword>
<keyword id="KW-0479">Metal-binding</keyword>
<keyword id="KW-0560">Oxidoreductase</keyword>
<keyword id="KW-0884">PQQ biosynthesis</keyword>
<keyword id="KW-0949">S-adenosyl-L-methionine</keyword>
<proteinExistence type="inferred from homology"/>
<name>PQQE_METC4</name>
<comment type="function">
    <text evidence="1">Catalyzes the cross-linking of a glutamate residue and a tyrosine residue in the PqqA protein as part of the biosynthesis of pyrroloquinoline quinone (PQQ).</text>
</comment>
<comment type="catalytic activity">
    <reaction evidence="1">
        <text>[PQQ precursor protein] + S-adenosyl-L-methionine = E-Y cross-linked-[PQQ precursor protein] + 5'-deoxyadenosine + L-methionine + H(+)</text>
        <dbReference type="Rhea" id="RHEA:56836"/>
        <dbReference type="Rhea" id="RHEA-COMP:14800"/>
        <dbReference type="Rhea" id="RHEA-COMP:14801"/>
        <dbReference type="ChEBI" id="CHEBI:15378"/>
        <dbReference type="ChEBI" id="CHEBI:17319"/>
        <dbReference type="ChEBI" id="CHEBI:57844"/>
        <dbReference type="ChEBI" id="CHEBI:59789"/>
        <dbReference type="ChEBI" id="CHEBI:141026"/>
        <dbReference type="ChEBI" id="CHEBI:141027"/>
        <dbReference type="EC" id="1.21.98.4"/>
    </reaction>
</comment>
<comment type="cofactor">
    <cofactor evidence="1">
        <name>[4Fe-4S] cluster</name>
        <dbReference type="ChEBI" id="CHEBI:49883"/>
    </cofactor>
    <text evidence="1">Binds 1 [4Fe-4S] cluster. The cluster is coordinated with 3 cysteines and an exchangeable S-adenosyl-L-methionine.</text>
</comment>
<comment type="pathway">
    <text evidence="1">Cofactor biosynthesis; pyrroloquinoline quinone biosynthesis.</text>
</comment>
<comment type="subunit">
    <text evidence="1">Interacts with PqqD. The interaction is necessary for activity of PqqE.</text>
</comment>
<comment type="similarity">
    <text evidence="1">Belongs to the radical SAM superfamily. PqqE family.</text>
</comment>
<reference key="1">
    <citation type="submission" date="2008-12" db="EMBL/GenBank/DDBJ databases">
        <title>Complete sequence of chromosome of Methylobacterium chloromethanicum CM4.</title>
        <authorList>
            <consortium name="US DOE Joint Genome Institute"/>
            <person name="Lucas S."/>
            <person name="Copeland A."/>
            <person name="Lapidus A."/>
            <person name="Glavina del Rio T."/>
            <person name="Dalin E."/>
            <person name="Tice H."/>
            <person name="Bruce D."/>
            <person name="Goodwin L."/>
            <person name="Pitluck S."/>
            <person name="Chertkov O."/>
            <person name="Brettin T."/>
            <person name="Detter J.C."/>
            <person name="Han C."/>
            <person name="Larimer F."/>
            <person name="Land M."/>
            <person name="Hauser L."/>
            <person name="Kyrpides N."/>
            <person name="Mikhailova N."/>
            <person name="Marx C."/>
            <person name="Richardson P."/>
        </authorList>
    </citation>
    <scope>NUCLEOTIDE SEQUENCE [LARGE SCALE GENOMIC DNA]</scope>
    <source>
        <strain>CM4 / NCIMB 13688</strain>
    </source>
</reference>
<gene>
    <name evidence="1" type="primary">pqqE</name>
    <name type="ordered locus">Mchl_2153</name>
</gene>
<accession>B7KXC6</accession>
<evidence type="ECO:0000255" key="1">
    <source>
        <dbReference type="HAMAP-Rule" id="MF_00660"/>
    </source>
</evidence>
<evidence type="ECO:0000255" key="2">
    <source>
        <dbReference type="PROSITE-ProRule" id="PRU01266"/>
    </source>
</evidence>